<comment type="function">
    <text evidence="1">Catalyzes the excretion of spermidine.</text>
</comment>
<comment type="subunit">
    <text evidence="1">Forms a complex with MdtJ.</text>
</comment>
<comment type="subcellular location">
    <subcellularLocation>
        <location evidence="1">Cell inner membrane</location>
        <topology evidence="1">Multi-pass membrane protein</topology>
    </subcellularLocation>
</comment>
<comment type="similarity">
    <text evidence="1">Belongs to the drug/metabolite transporter (DMT) superfamily. Small multidrug resistance (SMR) (TC 2.A.7.1) family. MdtI subfamily.</text>
</comment>
<name>MDTI_SALTI</name>
<reference key="1">
    <citation type="journal article" date="2001" name="Nature">
        <title>Complete genome sequence of a multiple drug resistant Salmonella enterica serovar Typhi CT18.</title>
        <authorList>
            <person name="Parkhill J."/>
            <person name="Dougan G."/>
            <person name="James K.D."/>
            <person name="Thomson N.R."/>
            <person name="Pickard D."/>
            <person name="Wain J."/>
            <person name="Churcher C.M."/>
            <person name="Mungall K.L."/>
            <person name="Bentley S.D."/>
            <person name="Holden M.T.G."/>
            <person name="Sebaihia M."/>
            <person name="Baker S."/>
            <person name="Basham D."/>
            <person name="Brooks K."/>
            <person name="Chillingworth T."/>
            <person name="Connerton P."/>
            <person name="Cronin A."/>
            <person name="Davis P."/>
            <person name="Davies R.M."/>
            <person name="Dowd L."/>
            <person name="White N."/>
            <person name="Farrar J."/>
            <person name="Feltwell T."/>
            <person name="Hamlin N."/>
            <person name="Haque A."/>
            <person name="Hien T.T."/>
            <person name="Holroyd S."/>
            <person name="Jagels K."/>
            <person name="Krogh A."/>
            <person name="Larsen T.S."/>
            <person name="Leather S."/>
            <person name="Moule S."/>
            <person name="O'Gaora P."/>
            <person name="Parry C."/>
            <person name="Quail M.A."/>
            <person name="Rutherford K.M."/>
            <person name="Simmonds M."/>
            <person name="Skelton J."/>
            <person name="Stevens K."/>
            <person name="Whitehead S."/>
            <person name="Barrell B.G."/>
        </authorList>
    </citation>
    <scope>NUCLEOTIDE SEQUENCE [LARGE SCALE GENOMIC DNA]</scope>
    <source>
        <strain>CT18</strain>
    </source>
</reference>
<reference key="2">
    <citation type="journal article" date="2003" name="J. Bacteriol.">
        <title>Comparative genomics of Salmonella enterica serovar Typhi strains Ty2 and CT18.</title>
        <authorList>
            <person name="Deng W."/>
            <person name="Liou S.-R."/>
            <person name="Plunkett G. III"/>
            <person name="Mayhew G.F."/>
            <person name="Rose D.J."/>
            <person name="Burland V."/>
            <person name="Kodoyianni V."/>
            <person name="Schwartz D.C."/>
            <person name="Blattner F.R."/>
        </authorList>
    </citation>
    <scope>NUCLEOTIDE SEQUENCE [LARGE SCALE GENOMIC DNA]</scope>
    <source>
        <strain>ATCC 700931 / Ty2</strain>
    </source>
</reference>
<organism>
    <name type="scientific">Salmonella typhi</name>
    <dbReference type="NCBI Taxonomy" id="90370"/>
    <lineage>
        <taxon>Bacteria</taxon>
        <taxon>Pseudomonadati</taxon>
        <taxon>Pseudomonadota</taxon>
        <taxon>Gammaproteobacteria</taxon>
        <taxon>Enterobacterales</taxon>
        <taxon>Enterobacteriaceae</taxon>
        <taxon>Salmonella</taxon>
    </lineage>
</organism>
<gene>
    <name evidence="1" type="primary">mdtI</name>
    <name type="ordered locus">STY1584</name>
    <name type="ordered locus">t1403</name>
</gene>
<sequence length="109" mass="11686">MQQFEWIHGAWLGLAIMLEIAANVLLKFSDGFRRKCYGILSLAAVLAAFSALSQAVKGIDLSVAYALWGGFGIAATLAAGWVLFGQRLNPKGWVGVILLLAGMVMIKFA</sequence>
<evidence type="ECO:0000255" key="1">
    <source>
        <dbReference type="HAMAP-Rule" id="MF_01597"/>
    </source>
</evidence>
<protein>
    <recommendedName>
        <fullName evidence="1">Spermidine export protein MdtI</fullName>
    </recommendedName>
</protein>
<keyword id="KW-0997">Cell inner membrane</keyword>
<keyword id="KW-1003">Cell membrane</keyword>
<keyword id="KW-0472">Membrane</keyword>
<keyword id="KW-0812">Transmembrane</keyword>
<keyword id="KW-1133">Transmembrane helix</keyword>
<keyword id="KW-0813">Transport</keyword>
<feature type="chain" id="PRO_0000331148" description="Spermidine export protein MdtI">
    <location>
        <begin position="1"/>
        <end position="109"/>
    </location>
</feature>
<feature type="transmembrane region" description="Helical" evidence="1">
    <location>
        <begin position="6"/>
        <end position="26"/>
    </location>
</feature>
<feature type="transmembrane region" description="Helical" evidence="1">
    <location>
        <begin position="36"/>
        <end position="56"/>
    </location>
</feature>
<feature type="transmembrane region" description="Helical" evidence="1">
    <location>
        <begin position="64"/>
        <end position="84"/>
    </location>
</feature>
<feature type="transmembrane region" description="Helical" evidence="1">
    <location>
        <begin position="88"/>
        <end position="108"/>
    </location>
</feature>
<dbReference type="EMBL" id="AL513382">
    <property type="protein sequence ID" value="CAD01831.1"/>
    <property type="molecule type" value="Genomic_DNA"/>
</dbReference>
<dbReference type="EMBL" id="AE014613">
    <property type="protein sequence ID" value="AAO69047.1"/>
    <property type="molecule type" value="Genomic_DNA"/>
</dbReference>
<dbReference type="RefSeq" id="NP_455997.1">
    <property type="nucleotide sequence ID" value="NC_003198.1"/>
</dbReference>
<dbReference type="RefSeq" id="WP_001183821.1">
    <property type="nucleotide sequence ID" value="NZ_WSUR01000040.1"/>
</dbReference>
<dbReference type="SMR" id="Q8XG16"/>
<dbReference type="KEGG" id="stt:t1403"/>
<dbReference type="KEGG" id="sty:STY1584"/>
<dbReference type="PATRIC" id="fig|220341.7.peg.1592"/>
<dbReference type="eggNOG" id="COG2076">
    <property type="taxonomic scope" value="Bacteria"/>
</dbReference>
<dbReference type="HOGENOM" id="CLU_133067_0_4_6"/>
<dbReference type="OMA" id="VAAGWIM"/>
<dbReference type="OrthoDB" id="71834at2"/>
<dbReference type="Proteomes" id="UP000000541">
    <property type="component" value="Chromosome"/>
</dbReference>
<dbReference type="Proteomes" id="UP000002670">
    <property type="component" value="Chromosome"/>
</dbReference>
<dbReference type="GO" id="GO:0005886">
    <property type="term" value="C:plasma membrane"/>
    <property type="evidence" value="ECO:0007669"/>
    <property type="project" value="UniProtKB-SubCell"/>
</dbReference>
<dbReference type="GO" id="GO:0015199">
    <property type="term" value="F:amino-acid betaine transmembrane transporter activity"/>
    <property type="evidence" value="ECO:0007669"/>
    <property type="project" value="TreeGrafter"/>
</dbReference>
<dbReference type="GO" id="GO:0015297">
    <property type="term" value="F:antiporter activity"/>
    <property type="evidence" value="ECO:0007669"/>
    <property type="project" value="TreeGrafter"/>
</dbReference>
<dbReference type="GO" id="GO:0015220">
    <property type="term" value="F:choline transmembrane transporter activity"/>
    <property type="evidence" value="ECO:0007669"/>
    <property type="project" value="TreeGrafter"/>
</dbReference>
<dbReference type="GO" id="GO:0015606">
    <property type="term" value="F:spermidine transmembrane transporter activity"/>
    <property type="evidence" value="ECO:0007669"/>
    <property type="project" value="UniProtKB-UniRule"/>
</dbReference>
<dbReference type="GO" id="GO:0031460">
    <property type="term" value="P:glycine betaine transport"/>
    <property type="evidence" value="ECO:0007669"/>
    <property type="project" value="TreeGrafter"/>
</dbReference>
<dbReference type="FunFam" id="1.10.3730.20:FF:000001">
    <property type="entry name" value="Quaternary ammonium compound resistance transporter SugE"/>
    <property type="match status" value="1"/>
</dbReference>
<dbReference type="Gene3D" id="1.10.3730.20">
    <property type="match status" value="1"/>
</dbReference>
<dbReference type="HAMAP" id="MF_01597">
    <property type="entry name" value="MdtI"/>
    <property type="match status" value="1"/>
</dbReference>
<dbReference type="InterPro" id="IPR000390">
    <property type="entry name" value="Small_drug/metabolite_transptr"/>
</dbReference>
<dbReference type="InterPro" id="IPR045324">
    <property type="entry name" value="Small_multidrug_res"/>
</dbReference>
<dbReference type="InterPro" id="IPR023737">
    <property type="entry name" value="Spermidine_export_MdtI"/>
</dbReference>
<dbReference type="NCBIfam" id="NF007934">
    <property type="entry name" value="PRK10650.1"/>
    <property type="match status" value="1"/>
</dbReference>
<dbReference type="PANTHER" id="PTHR30561">
    <property type="entry name" value="SMR FAMILY PROTON-DEPENDENT DRUG EFFLUX TRANSPORTER SUGE"/>
    <property type="match status" value="1"/>
</dbReference>
<dbReference type="PANTHER" id="PTHR30561:SF6">
    <property type="entry name" value="SPERMIDINE EXPORT PROTEIN MDTI"/>
    <property type="match status" value="1"/>
</dbReference>
<dbReference type="Pfam" id="PF00893">
    <property type="entry name" value="Multi_Drug_Res"/>
    <property type="match status" value="1"/>
</dbReference>
<dbReference type="SUPFAM" id="SSF103481">
    <property type="entry name" value="Multidrug resistance efflux transporter EmrE"/>
    <property type="match status" value="1"/>
</dbReference>
<accession>Q8XG16</accession>
<accession>Q7AMY6</accession>
<proteinExistence type="inferred from homology"/>